<protein>
    <recommendedName>
        <fullName evidence="1">Putative pterin-4-alpha-carbinolamine dehydratase</fullName>
        <shortName evidence="1">PHS</shortName>
        <ecNumber evidence="1">4.2.1.96</ecNumber>
    </recommendedName>
    <alternativeName>
        <fullName evidence="1">4-alpha-hydroxy-tetrahydropterin dehydratase</fullName>
    </alternativeName>
    <alternativeName>
        <fullName evidence="1">Pterin carbinolamine dehydratase</fullName>
        <shortName evidence="1">PCD</shortName>
    </alternativeName>
</protein>
<gene>
    <name type="ordered locus">Tcr_0631</name>
</gene>
<evidence type="ECO:0000255" key="1">
    <source>
        <dbReference type="HAMAP-Rule" id="MF_00434"/>
    </source>
</evidence>
<organism>
    <name type="scientific">Hydrogenovibrio crunogenus (strain DSM 25203 / XCL-2)</name>
    <name type="common">Thiomicrospira crunogena</name>
    <dbReference type="NCBI Taxonomy" id="317025"/>
    <lineage>
        <taxon>Bacteria</taxon>
        <taxon>Pseudomonadati</taxon>
        <taxon>Pseudomonadota</taxon>
        <taxon>Gammaproteobacteria</taxon>
        <taxon>Thiotrichales</taxon>
        <taxon>Piscirickettsiaceae</taxon>
        <taxon>Hydrogenovibrio</taxon>
    </lineage>
</organism>
<keyword id="KW-0456">Lyase</keyword>
<proteinExistence type="inferred from homology"/>
<comment type="catalytic activity">
    <reaction evidence="1">
        <text>(4aS,6R)-4a-hydroxy-L-erythro-5,6,7,8-tetrahydrobiopterin = (6R)-L-erythro-6,7-dihydrobiopterin + H2O</text>
        <dbReference type="Rhea" id="RHEA:11920"/>
        <dbReference type="ChEBI" id="CHEBI:15377"/>
        <dbReference type="ChEBI" id="CHEBI:15642"/>
        <dbReference type="ChEBI" id="CHEBI:43120"/>
        <dbReference type="EC" id="4.2.1.96"/>
    </reaction>
</comment>
<comment type="similarity">
    <text evidence="1">Belongs to the pterin-4-alpha-carbinolamine dehydratase family.</text>
</comment>
<sequence>MTTEIALKDQSCETIEKGSKAMIIPRIESYLSQMPGWDVPLDYQTLTKTFSFKNYHQTVAFVNAITWVAHKEDHHPEICFGYNECKVILTTHSIKGISQNDFIMAAKIDALLD</sequence>
<accession>Q31HZ6</accession>
<feature type="chain" id="PRO_0000231476" description="Putative pterin-4-alpha-carbinolamine dehydratase">
    <location>
        <begin position="1"/>
        <end position="113"/>
    </location>
</feature>
<reference key="1">
    <citation type="journal article" date="2006" name="PLoS Biol.">
        <title>The genome of deep-sea vent chemolithoautotroph Thiomicrospira crunogena XCL-2.</title>
        <authorList>
            <person name="Scott K.M."/>
            <person name="Sievert S.M."/>
            <person name="Abril F.N."/>
            <person name="Ball L.A."/>
            <person name="Barrett C.J."/>
            <person name="Blake R.A."/>
            <person name="Boller A.J."/>
            <person name="Chain P.S.G."/>
            <person name="Clark J.A."/>
            <person name="Davis C.R."/>
            <person name="Detter C."/>
            <person name="Do K.F."/>
            <person name="Dobrinski K.P."/>
            <person name="Faza B.I."/>
            <person name="Fitzpatrick K.A."/>
            <person name="Freyermuth S.K."/>
            <person name="Harmer T.L."/>
            <person name="Hauser L.J."/>
            <person name="Huegler M."/>
            <person name="Kerfeld C.A."/>
            <person name="Klotz M.G."/>
            <person name="Kong W.W."/>
            <person name="Land M."/>
            <person name="Lapidus A."/>
            <person name="Larimer F.W."/>
            <person name="Longo D.L."/>
            <person name="Lucas S."/>
            <person name="Malfatti S.A."/>
            <person name="Massey S.E."/>
            <person name="Martin D.D."/>
            <person name="McCuddin Z."/>
            <person name="Meyer F."/>
            <person name="Moore J.L."/>
            <person name="Ocampo L.H. Jr."/>
            <person name="Paul J.H."/>
            <person name="Paulsen I.T."/>
            <person name="Reep D.K."/>
            <person name="Ren Q."/>
            <person name="Ross R.L."/>
            <person name="Sato P.Y."/>
            <person name="Thomas P."/>
            <person name="Tinkham L.E."/>
            <person name="Zeruth G.T."/>
        </authorList>
    </citation>
    <scope>NUCLEOTIDE SEQUENCE [LARGE SCALE GENOMIC DNA]</scope>
    <source>
        <strain>DSM 25203 / XCL-2</strain>
    </source>
</reference>
<dbReference type="EC" id="4.2.1.96" evidence="1"/>
<dbReference type="EMBL" id="CP000109">
    <property type="protein sequence ID" value="ABB41227.1"/>
    <property type="molecule type" value="Genomic_DNA"/>
</dbReference>
<dbReference type="SMR" id="Q31HZ6"/>
<dbReference type="STRING" id="317025.Tcr_0631"/>
<dbReference type="KEGG" id="tcx:Tcr_0631"/>
<dbReference type="eggNOG" id="COG2154">
    <property type="taxonomic scope" value="Bacteria"/>
</dbReference>
<dbReference type="HOGENOM" id="CLU_081974_2_2_6"/>
<dbReference type="OrthoDB" id="5294615at2"/>
<dbReference type="GO" id="GO:0008124">
    <property type="term" value="F:4-alpha-hydroxytetrahydrobiopterin dehydratase activity"/>
    <property type="evidence" value="ECO:0007669"/>
    <property type="project" value="UniProtKB-UniRule"/>
</dbReference>
<dbReference type="GO" id="GO:0006729">
    <property type="term" value="P:tetrahydrobiopterin biosynthetic process"/>
    <property type="evidence" value="ECO:0007669"/>
    <property type="project" value="InterPro"/>
</dbReference>
<dbReference type="CDD" id="cd00913">
    <property type="entry name" value="PCD_DCoH_subfamily_a"/>
    <property type="match status" value="1"/>
</dbReference>
<dbReference type="Gene3D" id="3.30.1360.20">
    <property type="entry name" value="Transcriptional coactivator/pterin dehydratase"/>
    <property type="match status" value="1"/>
</dbReference>
<dbReference type="HAMAP" id="MF_00434">
    <property type="entry name" value="Pterin_4_alpha"/>
    <property type="match status" value="1"/>
</dbReference>
<dbReference type="InterPro" id="IPR036428">
    <property type="entry name" value="PCD_sf"/>
</dbReference>
<dbReference type="InterPro" id="IPR001533">
    <property type="entry name" value="Pterin_deHydtase"/>
</dbReference>
<dbReference type="PANTHER" id="PTHR12599">
    <property type="entry name" value="PTERIN-4-ALPHA-CARBINOLAMINE DEHYDRATASE"/>
    <property type="match status" value="1"/>
</dbReference>
<dbReference type="PANTHER" id="PTHR12599:SF0">
    <property type="entry name" value="PTERIN-4-ALPHA-CARBINOLAMINE DEHYDRATASE"/>
    <property type="match status" value="1"/>
</dbReference>
<dbReference type="Pfam" id="PF01329">
    <property type="entry name" value="Pterin_4a"/>
    <property type="match status" value="1"/>
</dbReference>
<dbReference type="SUPFAM" id="SSF55248">
    <property type="entry name" value="PCD-like"/>
    <property type="match status" value="1"/>
</dbReference>
<name>PHS_HYDCU</name>